<evidence type="ECO:0000255" key="1">
    <source>
        <dbReference type="PROSITE-ProRule" id="PRU00303"/>
    </source>
</evidence>
<reference key="1">
    <citation type="journal article" date="1992" name="Gene">
        <title>Sequence of the complete osp operon encoding two major outer membrane proteins of a European Borrelia burgdorferi isolate (B29).</title>
        <authorList>
            <person name="Fellinger W."/>
            <person name="Redl B."/>
            <person name="Stoeffler G."/>
        </authorList>
    </citation>
    <scope>NUCLEOTIDE SEQUENCE [GENOMIC DNA]</scope>
    <source>
        <strain>B29</strain>
    </source>
</reference>
<reference key="2">
    <citation type="journal article" date="1992" name="Curr. Commun. Cell Mol. Biol.">
        <title>Molecular analysis of the major outer surface protein locus from a divergent Borrelia burgdorferi isolate from Europe.</title>
        <authorList>
            <person name="Rosa P.A."/>
            <person name="Hogan D."/>
            <person name="Margolis N."/>
        </authorList>
    </citation>
    <scope>NUCLEOTIDE SEQUENCE [GENOMIC DNA]</scope>
    <source>
        <strain>G2</strain>
    </source>
</reference>
<dbReference type="EMBL" id="M88764">
    <property type="protein sequence ID" value="AAA18509.1"/>
    <property type="molecule type" value="Unassigned_DNA"/>
</dbReference>
<dbReference type="EMBL" id="L19702">
    <property type="protein sequence ID" value="AAA88847.1"/>
    <property type="molecule type" value="Genomic_DNA"/>
</dbReference>
<dbReference type="PIR" id="JC1431">
    <property type="entry name" value="JC1431"/>
</dbReference>
<dbReference type="SMR" id="Q09090"/>
<dbReference type="GO" id="GO:0009279">
    <property type="term" value="C:cell outer membrane"/>
    <property type="evidence" value="ECO:0007669"/>
    <property type="project" value="UniProtKB-SubCell"/>
</dbReference>
<dbReference type="Gene3D" id="3.90.930.1">
    <property type="match status" value="1"/>
</dbReference>
<dbReference type="Gene3D" id="2.40.128.160">
    <property type="entry name" value="C1 set domains (antibody constant domain-like)"/>
    <property type="match status" value="1"/>
</dbReference>
<dbReference type="InterPro" id="IPR001809">
    <property type="entry name" value="OM_lipoprot_Borrelia"/>
</dbReference>
<dbReference type="InterPro" id="IPR023322">
    <property type="entry name" value="OM_lipoprot_dom_sf"/>
</dbReference>
<dbReference type="Pfam" id="PF00820">
    <property type="entry name" value="Lipoprotein_1"/>
    <property type="match status" value="1"/>
</dbReference>
<dbReference type="PRINTS" id="PR00968">
    <property type="entry name" value="OUTRSURFACE"/>
</dbReference>
<dbReference type="SUPFAM" id="SSF51087">
    <property type="entry name" value="Outer surface protein"/>
    <property type="match status" value="1"/>
</dbReference>
<dbReference type="PROSITE" id="PS51257">
    <property type="entry name" value="PROKAR_LIPOPROTEIN"/>
    <property type="match status" value="1"/>
</dbReference>
<proteinExistence type="inferred from homology"/>
<accession>Q09090</accession>
<accession>Q44949</accession>
<sequence length="295" mass="32027">MKQYLLGFTLVFALIACAQKGANPEQKGGDADVLNTSKTEKYLNKNLPSEAEDLVSLFNDSEIFVSKEKNKDGKYVLRAIVDTVELKGVADKNDGSEGKLEGLKPDNSKVTMSISKDQNTITIETRDSSNTKVASKVFKKDGSLTEESYKAGQLDSKKLTRSNKTTLEYSDMTNAENATTAIETLKNGIEFKGSLVGGKATLQIVESTVTLTREIDKDGKLKIYLKDTASSSKKTVSWNDTDTLTISAEGKKTKDLVFLTDGTITVQNYDSASGTTLEGTATEIKNLEALKTALK</sequence>
<protein>
    <recommendedName>
        <fullName>Outer surface protein B</fullName>
    </recommendedName>
</protein>
<feature type="signal peptide" evidence="1">
    <location>
        <begin position="1"/>
        <end position="16"/>
    </location>
</feature>
<feature type="chain" id="PRO_0000018082" description="Outer surface protein B">
    <location>
        <begin position="17"/>
        <end position="295"/>
    </location>
</feature>
<feature type="lipid moiety-binding region" description="N-palmitoyl cysteine" evidence="1">
    <location>
        <position position="17"/>
    </location>
</feature>
<feature type="lipid moiety-binding region" description="S-diacylglycerol cysteine" evidence="1">
    <location>
        <position position="17"/>
    </location>
</feature>
<feature type="sequence variant" description="In strain: G2.">
    <original>V</original>
    <variation>A</variation>
    <location>
        <position position="236"/>
    </location>
</feature>
<comment type="subcellular location">
    <subcellularLocation>
        <location>Cell outer membrane</location>
        <topology>Lipid-anchor</topology>
    </subcellularLocation>
</comment>
<name>OSPB_BORBG</name>
<organism>
    <name type="scientific">Borreliella burgdorferi</name>
    <name type="common">Lyme disease spirochete</name>
    <name type="synonym">Borrelia burgdorferi</name>
    <dbReference type="NCBI Taxonomy" id="139"/>
    <lineage>
        <taxon>Bacteria</taxon>
        <taxon>Pseudomonadati</taxon>
        <taxon>Spirochaetota</taxon>
        <taxon>Spirochaetia</taxon>
        <taxon>Spirochaetales</taxon>
        <taxon>Borreliaceae</taxon>
        <taxon>Borreliella</taxon>
    </lineage>
</organism>
<geneLocation type="plasmid">
    <name>lp54</name>
</geneLocation>
<keyword id="KW-0998">Cell outer membrane</keyword>
<keyword id="KW-0449">Lipoprotein</keyword>
<keyword id="KW-0472">Membrane</keyword>
<keyword id="KW-0564">Palmitate</keyword>
<keyword id="KW-0614">Plasmid</keyword>
<keyword id="KW-0732">Signal</keyword>
<gene>
    <name type="primary">ospB</name>
</gene>